<keyword id="KW-0030">Aminoacyl-tRNA synthetase</keyword>
<keyword id="KW-0067">ATP-binding</keyword>
<keyword id="KW-0963">Cytoplasm</keyword>
<keyword id="KW-0436">Ligase</keyword>
<keyword id="KW-0547">Nucleotide-binding</keyword>
<keyword id="KW-0648">Protein biosynthesis</keyword>
<keyword id="KW-1185">Reference proteome</keyword>
<proteinExistence type="inferred from homology"/>
<gene>
    <name evidence="1" type="primary">aspS</name>
    <name type="ordered locus">Daci_5453</name>
</gene>
<evidence type="ECO:0000255" key="1">
    <source>
        <dbReference type="HAMAP-Rule" id="MF_00044"/>
    </source>
</evidence>
<reference key="1">
    <citation type="submission" date="2007-11" db="EMBL/GenBank/DDBJ databases">
        <title>Complete sequence of Delftia acidovorans DSM 14801 / SPH-1.</title>
        <authorList>
            <person name="Copeland A."/>
            <person name="Lucas S."/>
            <person name="Lapidus A."/>
            <person name="Barry K."/>
            <person name="Glavina del Rio T."/>
            <person name="Dalin E."/>
            <person name="Tice H."/>
            <person name="Pitluck S."/>
            <person name="Lowry S."/>
            <person name="Clum A."/>
            <person name="Schmutz J."/>
            <person name="Larimer F."/>
            <person name="Land M."/>
            <person name="Hauser L."/>
            <person name="Kyrpides N."/>
            <person name="Kim E."/>
            <person name="Schleheck D."/>
            <person name="Richardson P."/>
        </authorList>
    </citation>
    <scope>NUCLEOTIDE SEQUENCE [LARGE SCALE GENOMIC DNA]</scope>
    <source>
        <strain>DSM 14801 / SPH-1</strain>
    </source>
</reference>
<feature type="chain" id="PRO_1000090987" description="Aspartate--tRNA(Asp/Asn) ligase">
    <location>
        <begin position="1"/>
        <end position="600"/>
    </location>
</feature>
<feature type="region of interest" description="Aspartate" evidence="1">
    <location>
        <begin position="198"/>
        <end position="201"/>
    </location>
</feature>
<feature type="binding site" evidence="1">
    <location>
        <position position="174"/>
    </location>
    <ligand>
        <name>L-aspartate</name>
        <dbReference type="ChEBI" id="CHEBI:29991"/>
    </ligand>
</feature>
<feature type="binding site" evidence="1">
    <location>
        <begin position="220"/>
        <end position="222"/>
    </location>
    <ligand>
        <name>ATP</name>
        <dbReference type="ChEBI" id="CHEBI:30616"/>
    </ligand>
</feature>
<feature type="binding site" evidence="1">
    <location>
        <position position="220"/>
    </location>
    <ligand>
        <name>L-aspartate</name>
        <dbReference type="ChEBI" id="CHEBI:29991"/>
    </ligand>
</feature>
<feature type="binding site" evidence="1">
    <location>
        <position position="229"/>
    </location>
    <ligand>
        <name>ATP</name>
        <dbReference type="ChEBI" id="CHEBI:30616"/>
    </ligand>
</feature>
<feature type="binding site" evidence="1">
    <location>
        <position position="456"/>
    </location>
    <ligand>
        <name>L-aspartate</name>
        <dbReference type="ChEBI" id="CHEBI:29991"/>
    </ligand>
</feature>
<feature type="binding site" evidence="1">
    <location>
        <position position="490"/>
    </location>
    <ligand>
        <name>ATP</name>
        <dbReference type="ChEBI" id="CHEBI:30616"/>
    </ligand>
</feature>
<feature type="binding site" evidence="1">
    <location>
        <position position="497"/>
    </location>
    <ligand>
        <name>L-aspartate</name>
        <dbReference type="ChEBI" id="CHEBI:29991"/>
    </ligand>
</feature>
<feature type="binding site" evidence="1">
    <location>
        <begin position="542"/>
        <end position="545"/>
    </location>
    <ligand>
        <name>ATP</name>
        <dbReference type="ChEBI" id="CHEBI:30616"/>
    </ligand>
</feature>
<feature type="site" description="Important for tRNA non-discrimination" evidence="1">
    <location>
        <position position="32"/>
    </location>
</feature>
<feature type="site" description="Important for tRNA non-discrimination" evidence="1">
    <location>
        <position position="83"/>
    </location>
</feature>
<dbReference type="EC" id="6.1.1.23" evidence="1"/>
<dbReference type="EMBL" id="CP000884">
    <property type="protein sequence ID" value="ABX38082.1"/>
    <property type="molecule type" value="Genomic_DNA"/>
</dbReference>
<dbReference type="RefSeq" id="WP_012207251.1">
    <property type="nucleotide sequence ID" value="NC_010002.1"/>
</dbReference>
<dbReference type="SMR" id="A9BP37"/>
<dbReference type="STRING" id="398578.Daci_5453"/>
<dbReference type="GeneID" id="24119196"/>
<dbReference type="KEGG" id="dac:Daci_5453"/>
<dbReference type="eggNOG" id="COG0173">
    <property type="taxonomic scope" value="Bacteria"/>
</dbReference>
<dbReference type="HOGENOM" id="CLU_014330_3_2_4"/>
<dbReference type="Proteomes" id="UP000000784">
    <property type="component" value="Chromosome"/>
</dbReference>
<dbReference type="GO" id="GO:0005737">
    <property type="term" value="C:cytoplasm"/>
    <property type="evidence" value="ECO:0007669"/>
    <property type="project" value="UniProtKB-SubCell"/>
</dbReference>
<dbReference type="GO" id="GO:0004815">
    <property type="term" value="F:aspartate-tRNA ligase activity"/>
    <property type="evidence" value="ECO:0007669"/>
    <property type="project" value="UniProtKB-UniRule"/>
</dbReference>
<dbReference type="GO" id="GO:0050560">
    <property type="term" value="F:aspartate-tRNA(Asn) ligase activity"/>
    <property type="evidence" value="ECO:0007669"/>
    <property type="project" value="UniProtKB-EC"/>
</dbReference>
<dbReference type="GO" id="GO:0005524">
    <property type="term" value="F:ATP binding"/>
    <property type="evidence" value="ECO:0007669"/>
    <property type="project" value="UniProtKB-UniRule"/>
</dbReference>
<dbReference type="GO" id="GO:0003676">
    <property type="term" value="F:nucleic acid binding"/>
    <property type="evidence" value="ECO:0007669"/>
    <property type="project" value="InterPro"/>
</dbReference>
<dbReference type="GO" id="GO:0006422">
    <property type="term" value="P:aspartyl-tRNA aminoacylation"/>
    <property type="evidence" value="ECO:0007669"/>
    <property type="project" value="UniProtKB-UniRule"/>
</dbReference>
<dbReference type="CDD" id="cd00777">
    <property type="entry name" value="AspRS_core"/>
    <property type="match status" value="1"/>
</dbReference>
<dbReference type="CDD" id="cd04317">
    <property type="entry name" value="EcAspRS_like_N"/>
    <property type="match status" value="1"/>
</dbReference>
<dbReference type="Gene3D" id="3.30.930.10">
    <property type="entry name" value="Bira Bifunctional Protein, Domain 2"/>
    <property type="match status" value="1"/>
</dbReference>
<dbReference type="Gene3D" id="3.30.1360.30">
    <property type="entry name" value="GAD-like domain"/>
    <property type="match status" value="1"/>
</dbReference>
<dbReference type="Gene3D" id="2.40.50.140">
    <property type="entry name" value="Nucleic acid-binding proteins"/>
    <property type="match status" value="1"/>
</dbReference>
<dbReference type="HAMAP" id="MF_00044">
    <property type="entry name" value="Asp_tRNA_synth_type1"/>
    <property type="match status" value="1"/>
</dbReference>
<dbReference type="InterPro" id="IPR004364">
    <property type="entry name" value="Aa-tRNA-synt_II"/>
</dbReference>
<dbReference type="InterPro" id="IPR006195">
    <property type="entry name" value="aa-tRNA-synth_II"/>
</dbReference>
<dbReference type="InterPro" id="IPR045864">
    <property type="entry name" value="aa-tRNA-synth_II/BPL/LPL"/>
</dbReference>
<dbReference type="InterPro" id="IPR004524">
    <property type="entry name" value="Asp-tRNA-ligase_1"/>
</dbReference>
<dbReference type="InterPro" id="IPR047089">
    <property type="entry name" value="Asp-tRNA-ligase_1_N"/>
</dbReference>
<dbReference type="InterPro" id="IPR002312">
    <property type="entry name" value="Asp/Asn-tRNA-synth_IIb"/>
</dbReference>
<dbReference type="InterPro" id="IPR047090">
    <property type="entry name" value="AspRS_core"/>
</dbReference>
<dbReference type="InterPro" id="IPR004115">
    <property type="entry name" value="GAD-like_sf"/>
</dbReference>
<dbReference type="InterPro" id="IPR029351">
    <property type="entry name" value="GAD_dom"/>
</dbReference>
<dbReference type="InterPro" id="IPR012340">
    <property type="entry name" value="NA-bd_OB-fold"/>
</dbReference>
<dbReference type="InterPro" id="IPR004365">
    <property type="entry name" value="NA-bd_OB_tRNA"/>
</dbReference>
<dbReference type="NCBIfam" id="TIGR00459">
    <property type="entry name" value="aspS_bact"/>
    <property type="match status" value="1"/>
</dbReference>
<dbReference type="NCBIfam" id="NF001750">
    <property type="entry name" value="PRK00476.1"/>
    <property type="match status" value="1"/>
</dbReference>
<dbReference type="PANTHER" id="PTHR22594:SF5">
    <property type="entry name" value="ASPARTATE--TRNA LIGASE, MITOCHONDRIAL"/>
    <property type="match status" value="1"/>
</dbReference>
<dbReference type="PANTHER" id="PTHR22594">
    <property type="entry name" value="ASPARTYL/LYSYL-TRNA SYNTHETASE"/>
    <property type="match status" value="1"/>
</dbReference>
<dbReference type="Pfam" id="PF02938">
    <property type="entry name" value="GAD"/>
    <property type="match status" value="1"/>
</dbReference>
<dbReference type="Pfam" id="PF00152">
    <property type="entry name" value="tRNA-synt_2"/>
    <property type="match status" value="1"/>
</dbReference>
<dbReference type="Pfam" id="PF01336">
    <property type="entry name" value="tRNA_anti-codon"/>
    <property type="match status" value="1"/>
</dbReference>
<dbReference type="PRINTS" id="PR01042">
    <property type="entry name" value="TRNASYNTHASP"/>
</dbReference>
<dbReference type="SUPFAM" id="SSF55681">
    <property type="entry name" value="Class II aaRS and biotin synthetases"/>
    <property type="match status" value="1"/>
</dbReference>
<dbReference type="SUPFAM" id="SSF55261">
    <property type="entry name" value="GAD domain-like"/>
    <property type="match status" value="1"/>
</dbReference>
<dbReference type="SUPFAM" id="SSF50249">
    <property type="entry name" value="Nucleic acid-binding proteins"/>
    <property type="match status" value="1"/>
</dbReference>
<dbReference type="PROSITE" id="PS50862">
    <property type="entry name" value="AA_TRNA_LIGASE_II"/>
    <property type="match status" value="1"/>
</dbReference>
<protein>
    <recommendedName>
        <fullName evidence="1">Aspartate--tRNA(Asp/Asn) ligase</fullName>
        <ecNumber evidence="1">6.1.1.23</ecNumber>
    </recommendedName>
    <alternativeName>
        <fullName evidence="1">Aspartyl-tRNA synthetase</fullName>
        <shortName evidence="1">AspRS</shortName>
    </alternativeName>
    <alternativeName>
        <fullName evidence="1">Non-discriminating aspartyl-tRNA synthetase</fullName>
        <shortName evidence="1">ND-AspRS</shortName>
    </alternativeName>
</protein>
<sequence length="600" mass="67879">MAMRSHYCGLVTEALMGETVTLCGWVNRRRDHGGVIFIDLRDREGYVQVVCDPDRAEMFKTAEGLRNEFCVQVKGLVRARPEGTTNDKLKSGQIEVLCHELNVLNASVTPPFQLDDENLSETVRLTNRVLDLRRPYMQRNMMLRYRTAIQVRNFLDKEGFIDIETPMLGKSTPEGARDYLVPSRVHDGEFFALPQSPQLYKQMLMVAGYDRYYQITKCFRDEDLRADRQPEFTQIDCETSFLDEEEIRAIFQRMITEVFKTQLDVDLGEFPMMTYQDAAFRFGSDKPDLRVKLEFTELTEIMKDVDFKVFSTPATTKGGRVVALRVPGGSQISRGEIDQYTEFVKIYGAKGLAWIKVNEVAKGRDGLQSPIVKNLHDAAIAEILKRTGAQDGDLIFFGADKEKIVNDSIGALRLKVGHSEFGKANGLFENRWAPLWVVDFPMFEHDEENDRWAAVHHPFTSPKDGHEELMVTDPANCLAKAYDMVLNGWELGGGSVRIHRADVQSKVFDALKISPEDARAKFGYLLDALQYGAPPHGGLAFGLDRLITLMTGADSIRDVIAFPKTQRAQDLLTQAPSPVDEKQLRELHIRLRNPLAATQG</sequence>
<organism>
    <name type="scientific">Delftia acidovorans (strain DSM 14801 / SPH-1)</name>
    <dbReference type="NCBI Taxonomy" id="398578"/>
    <lineage>
        <taxon>Bacteria</taxon>
        <taxon>Pseudomonadati</taxon>
        <taxon>Pseudomonadota</taxon>
        <taxon>Betaproteobacteria</taxon>
        <taxon>Burkholderiales</taxon>
        <taxon>Comamonadaceae</taxon>
        <taxon>Delftia</taxon>
    </lineage>
</organism>
<accession>A9BP37</accession>
<comment type="function">
    <text evidence="1">Aspartyl-tRNA synthetase with relaxed tRNA specificity since it is able to aspartylate not only its cognate tRNA(Asp) but also tRNA(Asn). Reaction proceeds in two steps: L-aspartate is first activated by ATP to form Asp-AMP and then transferred to the acceptor end of tRNA(Asp/Asn).</text>
</comment>
<comment type="catalytic activity">
    <reaction evidence="1">
        <text>tRNA(Asx) + L-aspartate + ATP = L-aspartyl-tRNA(Asx) + AMP + diphosphate</text>
        <dbReference type="Rhea" id="RHEA:18349"/>
        <dbReference type="Rhea" id="RHEA-COMP:9710"/>
        <dbReference type="Rhea" id="RHEA-COMP:9711"/>
        <dbReference type="ChEBI" id="CHEBI:29991"/>
        <dbReference type="ChEBI" id="CHEBI:30616"/>
        <dbReference type="ChEBI" id="CHEBI:33019"/>
        <dbReference type="ChEBI" id="CHEBI:78442"/>
        <dbReference type="ChEBI" id="CHEBI:78516"/>
        <dbReference type="ChEBI" id="CHEBI:456215"/>
        <dbReference type="EC" id="6.1.1.23"/>
    </reaction>
</comment>
<comment type="subunit">
    <text evidence="1">Homodimer.</text>
</comment>
<comment type="subcellular location">
    <subcellularLocation>
        <location evidence="1">Cytoplasm</location>
    </subcellularLocation>
</comment>
<comment type="similarity">
    <text evidence="1">Belongs to the class-II aminoacyl-tRNA synthetase family. Type 1 subfamily.</text>
</comment>
<name>SYDND_DELAS</name>